<protein>
    <recommendedName>
        <fullName>Myoglobin</fullName>
    </recommendedName>
    <alternativeName>
        <fullName evidence="2">Nitrite reductase MB</fullName>
        <ecNumber evidence="2">1.7.-.-</ecNumber>
    </alternativeName>
    <alternativeName>
        <fullName evidence="2">Pseudoperoxidase MB</fullName>
        <ecNumber evidence="2">1.11.1.-</ecNumber>
    </alternativeName>
</protein>
<keyword id="KW-0963">Cytoplasm</keyword>
<keyword id="KW-0349">Heme</keyword>
<keyword id="KW-0408">Iron</keyword>
<keyword id="KW-0479">Metal-binding</keyword>
<keyword id="KW-0514">Muscle protein</keyword>
<keyword id="KW-0560">Oxidoreductase</keyword>
<keyword id="KW-0561">Oxygen transport</keyword>
<keyword id="KW-0813">Transport</keyword>
<feature type="initiator methionine" description="Removed" evidence="1">
    <location>
        <position position="1"/>
    </location>
</feature>
<feature type="chain" id="PRO_0000053359" description="Myoglobin">
    <location>
        <begin position="2"/>
        <end position="147"/>
    </location>
</feature>
<feature type="domain" description="Globin" evidence="6">
    <location>
        <begin position="2"/>
        <end position="141"/>
    </location>
</feature>
<feature type="binding site" evidence="5">
    <location>
        <position position="60"/>
    </location>
    <ligand>
        <name>nitrite</name>
        <dbReference type="ChEBI" id="CHEBI:16301"/>
    </ligand>
</feature>
<feature type="binding site" evidence="4 6">
    <location>
        <position position="60"/>
    </location>
    <ligand>
        <name>O2</name>
        <dbReference type="ChEBI" id="CHEBI:15379"/>
    </ligand>
</feature>
<feature type="binding site" description="proximal binding residue" evidence="2">
    <location>
        <position position="89"/>
    </location>
    <ligand>
        <name>heme b</name>
        <dbReference type="ChEBI" id="CHEBI:60344"/>
    </ligand>
    <ligandPart>
        <name>Fe</name>
        <dbReference type="ChEBI" id="CHEBI:18248"/>
    </ligandPart>
</feature>
<name>MYG_AUXRO</name>
<proteinExistence type="evidence at transcript level"/>
<comment type="function">
    <text evidence="2">Monomeric heme protein which primary function is to store oxygen and facilitate its diffusion within muscle tissues. Reversibly binds oxygen through a pentacoordinated heme iron and enables its timely and efficient release as needed during periods of heightened demand. Depending on the oxidative conditions of tissues and cells, and in addition to its ability to bind oxygen, it also has a nitrite reductase activity whereby it regulates the production of bioactive nitric oxide. Under stress conditions, like hypoxia and anoxia, it also protects cells against reactive oxygen species thanks to its pseudoperoxidase activity.</text>
</comment>
<comment type="catalytic activity">
    <reaction evidence="2">
        <text>Fe(III)-heme b-[protein] + nitric oxide + H2O = Fe(II)-heme b-[protein] + nitrite + 2 H(+)</text>
        <dbReference type="Rhea" id="RHEA:77711"/>
        <dbReference type="Rhea" id="RHEA-COMP:18975"/>
        <dbReference type="Rhea" id="RHEA-COMP:18976"/>
        <dbReference type="ChEBI" id="CHEBI:15377"/>
        <dbReference type="ChEBI" id="CHEBI:15378"/>
        <dbReference type="ChEBI" id="CHEBI:16301"/>
        <dbReference type="ChEBI" id="CHEBI:16480"/>
        <dbReference type="ChEBI" id="CHEBI:55376"/>
        <dbReference type="ChEBI" id="CHEBI:60344"/>
    </reaction>
    <physiologicalReaction direction="right-to-left" evidence="2">
        <dbReference type="Rhea" id="RHEA:77713"/>
    </physiologicalReaction>
</comment>
<comment type="catalytic activity">
    <reaction evidence="2">
        <text>H2O2 + AH2 = A + 2 H2O</text>
        <dbReference type="Rhea" id="RHEA:30275"/>
        <dbReference type="ChEBI" id="CHEBI:13193"/>
        <dbReference type="ChEBI" id="CHEBI:15377"/>
        <dbReference type="ChEBI" id="CHEBI:16240"/>
        <dbReference type="ChEBI" id="CHEBI:17499"/>
    </reaction>
</comment>
<comment type="subunit">
    <text evidence="3">Monomeric.</text>
</comment>
<comment type="subcellular location">
    <subcellularLocation>
        <location evidence="2">Cytoplasm</location>
        <location evidence="2">Sarcoplasm</location>
    </subcellularLocation>
</comment>
<comment type="similarity">
    <text evidence="6">Belongs to the globin family.</text>
</comment>
<sequence>MADFDAVLKCWGPVEADFNTVGGMVLARLFKDHPDTQKLFPKFAGIAAGDLAGNAAVAAHGGTVLKKLGELLKAKGNHAAIIKPLANSHATKHKIPINNFKLITEALVHVMQEKAGLDAAGQTALRNVMGIVIADLEANYKELGFTG</sequence>
<accession>Q6I7B0</accession>
<evidence type="ECO:0000250" key="1"/>
<evidence type="ECO:0000250" key="2">
    <source>
        <dbReference type="UniProtKB" id="P02144"/>
    </source>
</evidence>
<evidence type="ECO:0000250" key="3">
    <source>
        <dbReference type="UniProtKB" id="P02185"/>
    </source>
</evidence>
<evidence type="ECO:0000250" key="4">
    <source>
        <dbReference type="UniProtKB" id="P02189"/>
    </source>
</evidence>
<evidence type="ECO:0000250" key="5">
    <source>
        <dbReference type="UniProtKB" id="P68082"/>
    </source>
</evidence>
<evidence type="ECO:0000255" key="6">
    <source>
        <dbReference type="PROSITE-ProRule" id="PRU00238"/>
    </source>
</evidence>
<dbReference type="EC" id="1.7.-.-" evidence="2"/>
<dbReference type="EC" id="1.11.1.-" evidence="2"/>
<dbReference type="EMBL" id="AB154423">
    <property type="protein sequence ID" value="BAD23846.1"/>
    <property type="molecule type" value="mRNA"/>
</dbReference>
<dbReference type="SMR" id="Q6I7B0"/>
<dbReference type="GO" id="GO:0070062">
    <property type="term" value="C:extracellular exosome"/>
    <property type="evidence" value="ECO:0007669"/>
    <property type="project" value="TreeGrafter"/>
</dbReference>
<dbReference type="GO" id="GO:0016528">
    <property type="term" value="C:sarcoplasm"/>
    <property type="evidence" value="ECO:0000250"/>
    <property type="project" value="UniProtKB"/>
</dbReference>
<dbReference type="GO" id="GO:0020037">
    <property type="term" value="F:heme binding"/>
    <property type="evidence" value="ECO:0007669"/>
    <property type="project" value="InterPro"/>
</dbReference>
<dbReference type="GO" id="GO:0046872">
    <property type="term" value="F:metal ion binding"/>
    <property type="evidence" value="ECO:0007669"/>
    <property type="project" value="UniProtKB-KW"/>
</dbReference>
<dbReference type="GO" id="GO:0098809">
    <property type="term" value="F:nitrite reductase activity"/>
    <property type="evidence" value="ECO:0000250"/>
    <property type="project" value="UniProtKB"/>
</dbReference>
<dbReference type="GO" id="GO:0019825">
    <property type="term" value="F:oxygen binding"/>
    <property type="evidence" value="ECO:0007669"/>
    <property type="project" value="InterPro"/>
</dbReference>
<dbReference type="GO" id="GO:0005344">
    <property type="term" value="F:oxygen carrier activity"/>
    <property type="evidence" value="ECO:0000250"/>
    <property type="project" value="UniProtKB"/>
</dbReference>
<dbReference type="GO" id="GO:0004601">
    <property type="term" value="F:peroxidase activity"/>
    <property type="evidence" value="ECO:0000250"/>
    <property type="project" value="UniProtKB"/>
</dbReference>
<dbReference type="GO" id="GO:0019430">
    <property type="term" value="P:removal of superoxide radicals"/>
    <property type="evidence" value="ECO:0000250"/>
    <property type="project" value="UniProtKB"/>
</dbReference>
<dbReference type="Gene3D" id="6.10.140.2100">
    <property type="match status" value="1"/>
</dbReference>
<dbReference type="Gene3D" id="6.10.140.2110">
    <property type="match status" value="1"/>
</dbReference>
<dbReference type="InterPro" id="IPR000971">
    <property type="entry name" value="Globin"/>
</dbReference>
<dbReference type="InterPro" id="IPR009050">
    <property type="entry name" value="Globin-like_sf"/>
</dbReference>
<dbReference type="InterPro" id="IPR002335">
    <property type="entry name" value="Myoglobin"/>
</dbReference>
<dbReference type="PANTHER" id="PTHR47132">
    <property type="entry name" value="MYOGLOBIN"/>
    <property type="match status" value="1"/>
</dbReference>
<dbReference type="PANTHER" id="PTHR47132:SF1">
    <property type="entry name" value="MYOGLOBIN"/>
    <property type="match status" value="1"/>
</dbReference>
<dbReference type="Pfam" id="PF00042">
    <property type="entry name" value="Globin"/>
    <property type="match status" value="1"/>
</dbReference>
<dbReference type="PRINTS" id="PR00613">
    <property type="entry name" value="MYOGLOBIN"/>
</dbReference>
<dbReference type="SUPFAM" id="SSF46458">
    <property type="entry name" value="Globin-like"/>
    <property type="match status" value="1"/>
</dbReference>
<dbReference type="PROSITE" id="PS01033">
    <property type="entry name" value="GLOBIN"/>
    <property type="match status" value="1"/>
</dbReference>
<gene>
    <name type="primary">mb</name>
</gene>
<reference key="1">
    <citation type="submission" date="2003-12" db="EMBL/GenBank/DDBJ databases">
        <title>Relationship between the primary structure and thermostability of tuna myoglobins.</title>
        <authorList>
            <person name="Ueki N."/>
            <person name="Ochiai Y."/>
            <person name="Watabe S."/>
        </authorList>
    </citation>
    <scope>NUCLEOTIDE SEQUENCE [MRNA]</scope>
</reference>
<organism>
    <name type="scientific">Auxis rochei</name>
    <name type="common">Bullet tuna</name>
    <dbReference type="NCBI Taxonomy" id="217026"/>
    <lineage>
        <taxon>Eukaryota</taxon>
        <taxon>Metazoa</taxon>
        <taxon>Chordata</taxon>
        <taxon>Craniata</taxon>
        <taxon>Vertebrata</taxon>
        <taxon>Euteleostomi</taxon>
        <taxon>Actinopterygii</taxon>
        <taxon>Neopterygii</taxon>
        <taxon>Teleostei</taxon>
        <taxon>Neoteleostei</taxon>
        <taxon>Acanthomorphata</taxon>
        <taxon>Pelagiaria</taxon>
        <taxon>Scombriformes</taxon>
        <taxon>Scombridae</taxon>
        <taxon>Auxis</taxon>
    </lineage>
</organism>